<name>MPRB_MYCSJ</name>
<sequence>MTLPPQPSRLKPPRNTSSLSLRWRVMLLAMSMVAMVVVLMSVAVYAVVSRALYDDIDNQLHSRARLLIESGSLAADPGKAIEGTAYSDVNAMLVNPGRSIYTANQQGQTLPLGEAEKDVISGELLLSLRTANHQRILAVHLTNGSSLLISKSLAPTGQVLGRLGTVLLIVGGVGVAVAAIAGGMVARAGLRPVGRLTQAAERVARTDDLRPIPVFGSDELARLTEAFNMMLRALTESRERQARLVSDAGHELRTPLTSLRTNVELLMASQAPGAPRLPEEEMAGLRADVIAQIEELSTLVGDLVDLTRDEAGGVVYETVDMAEVVDRSLERVRRRRNDIEFDVNVVGWQVYGDAAGLARAVLNLLDNAAKWSPPGGRVGVRLTQTDPVHAELVVSDQGPGIPEAERRLVFERFYRSTAARAMPGSGLGLAIVKQVVLKHGGALRVEDTVPGGNPPGTSFYVMLPGRPLTPGGNGTAPVPAAQFDPDMRSAGSRADRRVIKNTETNGKSRSASKEL</sequence>
<dbReference type="EC" id="2.7.13.3"/>
<dbReference type="EC" id="3.1.3.-"/>
<dbReference type="EMBL" id="CP000580">
    <property type="protein sequence ID" value="ABO00446.1"/>
    <property type="molecule type" value="Genomic_DNA"/>
</dbReference>
<dbReference type="SMR" id="A3Q5L8"/>
<dbReference type="KEGG" id="mjl:Mjls_4680"/>
<dbReference type="HOGENOM" id="CLU_000445_89_6_11"/>
<dbReference type="BioCyc" id="MSP164757:G1G8C-4723-MONOMER"/>
<dbReference type="GO" id="GO:0005886">
    <property type="term" value="C:plasma membrane"/>
    <property type="evidence" value="ECO:0007669"/>
    <property type="project" value="UniProtKB-SubCell"/>
</dbReference>
<dbReference type="GO" id="GO:0005524">
    <property type="term" value="F:ATP binding"/>
    <property type="evidence" value="ECO:0007669"/>
    <property type="project" value="UniProtKB-KW"/>
</dbReference>
<dbReference type="GO" id="GO:0004721">
    <property type="term" value="F:phosphoprotein phosphatase activity"/>
    <property type="evidence" value="ECO:0007669"/>
    <property type="project" value="UniProtKB-KW"/>
</dbReference>
<dbReference type="GO" id="GO:0000155">
    <property type="term" value="F:phosphorelay sensor kinase activity"/>
    <property type="evidence" value="ECO:0007669"/>
    <property type="project" value="InterPro"/>
</dbReference>
<dbReference type="CDD" id="cd06225">
    <property type="entry name" value="HAMP"/>
    <property type="match status" value="1"/>
</dbReference>
<dbReference type="CDD" id="cd00075">
    <property type="entry name" value="HATPase"/>
    <property type="match status" value="1"/>
</dbReference>
<dbReference type="CDD" id="cd00082">
    <property type="entry name" value="HisKA"/>
    <property type="match status" value="1"/>
</dbReference>
<dbReference type="FunFam" id="3.30.565.10:FF:000066">
    <property type="entry name" value="Two-component sensor kinase MprB"/>
    <property type="match status" value="1"/>
</dbReference>
<dbReference type="Gene3D" id="1.10.287.130">
    <property type="match status" value="1"/>
</dbReference>
<dbReference type="Gene3D" id="6.10.340.10">
    <property type="match status" value="1"/>
</dbReference>
<dbReference type="Gene3D" id="3.30.565.10">
    <property type="entry name" value="Histidine kinase-like ATPase, C-terminal domain"/>
    <property type="match status" value="1"/>
</dbReference>
<dbReference type="InterPro" id="IPR050980">
    <property type="entry name" value="2C_sensor_his_kinase"/>
</dbReference>
<dbReference type="InterPro" id="IPR003660">
    <property type="entry name" value="HAMP_dom"/>
</dbReference>
<dbReference type="InterPro" id="IPR036890">
    <property type="entry name" value="HATPase_C_sf"/>
</dbReference>
<dbReference type="InterPro" id="IPR005467">
    <property type="entry name" value="His_kinase_dom"/>
</dbReference>
<dbReference type="InterPro" id="IPR003661">
    <property type="entry name" value="HisK_dim/P_dom"/>
</dbReference>
<dbReference type="InterPro" id="IPR036097">
    <property type="entry name" value="HisK_dim/P_sf"/>
</dbReference>
<dbReference type="InterPro" id="IPR004358">
    <property type="entry name" value="Sig_transdc_His_kin-like_C"/>
</dbReference>
<dbReference type="PANTHER" id="PTHR44936">
    <property type="entry name" value="SENSOR PROTEIN CREC"/>
    <property type="match status" value="1"/>
</dbReference>
<dbReference type="PANTHER" id="PTHR44936:SF9">
    <property type="entry name" value="SENSOR PROTEIN CREC"/>
    <property type="match status" value="1"/>
</dbReference>
<dbReference type="Pfam" id="PF00672">
    <property type="entry name" value="HAMP"/>
    <property type="match status" value="1"/>
</dbReference>
<dbReference type="Pfam" id="PF02518">
    <property type="entry name" value="HATPase_c"/>
    <property type="match status" value="1"/>
</dbReference>
<dbReference type="Pfam" id="PF00512">
    <property type="entry name" value="HisKA"/>
    <property type="match status" value="1"/>
</dbReference>
<dbReference type="PRINTS" id="PR00344">
    <property type="entry name" value="BCTRLSENSOR"/>
</dbReference>
<dbReference type="SMART" id="SM00304">
    <property type="entry name" value="HAMP"/>
    <property type="match status" value="1"/>
</dbReference>
<dbReference type="SMART" id="SM00387">
    <property type="entry name" value="HATPase_c"/>
    <property type="match status" value="1"/>
</dbReference>
<dbReference type="SMART" id="SM00388">
    <property type="entry name" value="HisKA"/>
    <property type="match status" value="1"/>
</dbReference>
<dbReference type="SUPFAM" id="SSF55874">
    <property type="entry name" value="ATPase domain of HSP90 chaperone/DNA topoisomerase II/histidine kinase"/>
    <property type="match status" value="1"/>
</dbReference>
<dbReference type="SUPFAM" id="SSF158472">
    <property type="entry name" value="HAMP domain-like"/>
    <property type="match status" value="1"/>
</dbReference>
<dbReference type="SUPFAM" id="SSF47384">
    <property type="entry name" value="Homodimeric domain of signal transducing histidine kinase"/>
    <property type="match status" value="1"/>
</dbReference>
<dbReference type="PROSITE" id="PS50885">
    <property type="entry name" value="HAMP"/>
    <property type="match status" value="1"/>
</dbReference>
<dbReference type="PROSITE" id="PS50109">
    <property type="entry name" value="HIS_KIN"/>
    <property type="match status" value="1"/>
</dbReference>
<reference key="1">
    <citation type="submission" date="2007-02" db="EMBL/GenBank/DDBJ databases">
        <title>Complete sequence of Mycobacterium sp. JLS.</title>
        <authorList>
            <consortium name="US DOE Joint Genome Institute"/>
            <person name="Copeland A."/>
            <person name="Lucas S."/>
            <person name="Lapidus A."/>
            <person name="Barry K."/>
            <person name="Detter J.C."/>
            <person name="Glavina del Rio T."/>
            <person name="Hammon N."/>
            <person name="Israni S."/>
            <person name="Dalin E."/>
            <person name="Tice H."/>
            <person name="Pitluck S."/>
            <person name="Chain P."/>
            <person name="Malfatti S."/>
            <person name="Shin M."/>
            <person name="Vergez L."/>
            <person name="Schmutz J."/>
            <person name="Larimer F."/>
            <person name="Land M."/>
            <person name="Hauser L."/>
            <person name="Kyrpides N."/>
            <person name="Mikhailova N."/>
            <person name="Miller C.D."/>
            <person name="Anderson A.J."/>
            <person name="Sims R.C."/>
            <person name="Richardson P."/>
        </authorList>
    </citation>
    <scope>NUCLEOTIDE SEQUENCE [LARGE SCALE GENOMIC DNA]</scope>
    <source>
        <strain>JLS</strain>
    </source>
</reference>
<protein>
    <recommendedName>
        <fullName>Signal transduction histidine-protein kinase/phosphatase MprB</fullName>
        <ecNumber>2.7.13.3</ecNumber>
        <ecNumber>3.1.3.-</ecNumber>
    </recommendedName>
    <alternativeName>
        <fullName>Mycobacterial persistence regulator B</fullName>
    </alternativeName>
</protein>
<accession>A3Q5L8</accession>
<feature type="chain" id="PRO_0000308437" description="Signal transduction histidine-protein kinase/phosphatase MprB">
    <location>
        <begin position="1"/>
        <end position="515"/>
    </location>
</feature>
<feature type="topological domain" description="Cytoplasmic" evidence="2">
    <location>
        <begin position="1"/>
        <end position="24"/>
    </location>
</feature>
<feature type="transmembrane region" description="Helical" evidence="2">
    <location>
        <begin position="25"/>
        <end position="45"/>
    </location>
</feature>
<feature type="topological domain" description="Extracellular" evidence="2">
    <location>
        <begin position="46"/>
        <end position="165"/>
    </location>
</feature>
<feature type="transmembrane region" description="Helical" evidence="2">
    <location>
        <begin position="166"/>
        <end position="186"/>
    </location>
</feature>
<feature type="topological domain" description="Cytoplasmic" evidence="2">
    <location>
        <begin position="187"/>
        <end position="515"/>
    </location>
</feature>
<feature type="domain" description="HAMP" evidence="3">
    <location>
        <begin position="187"/>
        <end position="239"/>
    </location>
</feature>
<feature type="domain" description="Histidine kinase" evidence="4">
    <location>
        <begin position="247"/>
        <end position="467"/>
    </location>
</feature>
<feature type="region of interest" description="Disordered" evidence="5">
    <location>
        <begin position="468"/>
        <end position="515"/>
    </location>
</feature>
<feature type="modified residue" description="Phosphohistidine; by autocatalysis" evidence="4">
    <location>
        <position position="250"/>
    </location>
</feature>
<proteinExistence type="inferred from homology"/>
<evidence type="ECO:0000250" key="1"/>
<evidence type="ECO:0000255" key="2"/>
<evidence type="ECO:0000255" key="3">
    <source>
        <dbReference type="PROSITE-ProRule" id="PRU00102"/>
    </source>
</evidence>
<evidence type="ECO:0000255" key="4">
    <source>
        <dbReference type="PROSITE-ProRule" id="PRU00107"/>
    </source>
</evidence>
<evidence type="ECO:0000256" key="5">
    <source>
        <dbReference type="SAM" id="MobiDB-lite"/>
    </source>
</evidence>
<evidence type="ECO:0000305" key="6"/>
<comment type="function">
    <text evidence="1">Member of the two-component regulatory system MprB/MprA which contributes to maintaining a balance among several systems involved in stress resistance and is required for establishment and maintenance of persistent infection in the host. In response to environmental signals MprB acts both as a membrane-associated protein kinase that undergoes autophosphorylation and subsequently transfers the phosphate to MprA, and a protein phosphatase that dephosphorylates phospho-MprA (By similarity).</text>
</comment>
<comment type="catalytic activity">
    <reaction>
        <text>ATP + protein L-histidine = ADP + protein N-phospho-L-histidine.</text>
        <dbReference type="EC" id="2.7.13.3"/>
    </reaction>
</comment>
<comment type="cofactor">
    <cofactor evidence="1">
        <name>Mg(2+)</name>
        <dbReference type="ChEBI" id="CHEBI:18420"/>
    </cofactor>
    <cofactor evidence="1">
        <name>Mn(2+)</name>
        <dbReference type="ChEBI" id="CHEBI:29035"/>
    </cofactor>
</comment>
<comment type="subcellular location">
    <subcellularLocation>
        <location evidence="6">Cell membrane</location>
        <topology evidence="6">Multi-pass membrane protein</topology>
    </subcellularLocation>
</comment>
<comment type="PTM">
    <text evidence="1">Autophosphorylated.</text>
</comment>
<gene>
    <name type="primary">mprB</name>
    <name type="ordered locus">Mjls_4680</name>
</gene>
<keyword id="KW-0067">ATP-binding</keyword>
<keyword id="KW-1003">Cell membrane</keyword>
<keyword id="KW-0378">Hydrolase</keyword>
<keyword id="KW-0418">Kinase</keyword>
<keyword id="KW-0460">Magnesium</keyword>
<keyword id="KW-0464">Manganese</keyword>
<keyword id="KW-0472">Membrane</keyword>
<keyword id="KW-0547">Nucleotide-binding</keyword>
<keyword id="KW-0597">Phosphoprotein</keyword>
<keyword id="KW-0904">Protein phosphatase</keyword>
<keyword id="KW-0346">Stress response</keyword>
<keyword id="KW-0808">Transferase</keyword>
<keyword id="KW-0812">Transmembrane</keyword>
<keyword id="KW-1133">Transmembrane helix</keyword>
<keyword id="KW-0902">Two-component regulatory system</keyword>
<keyword id="KW-0843">Virulence</keyword>
<organism>
    <name type="scientific">Mycobacterium sp. (strain JLS)</name>
    <dbReference type="NCBI Taxonomy" id="164757"/>
    <lineage>
        <taxon>Bacteria</taxon>
        <taxon>Bacillati</taxon>
        <taxon>Actinomycetota</taxon>
        <taxon>Actinomycetes</taxon>
        <taxon>Mycobacteriales</taxon>
        <taxon>Mycobacteriaceae</taxon>
        <taxon>Mycobacterium</taxon>
    </lineage>
</organism>